<sequence length="747" mass="84881">MWGFLKRPVVVTADINLSLVALTGMGLLSRLWRLTYPRAVVFDEVYYGQYISFYMKQIFFLDDSGPPFGHMVLALGGYLGGFDGNFLWNRIGAEYSSNVPVWSLRLLPALAGALSVPMAYQIVLELHFSHCAAMGAALLMLIENALITQSRLMLLESVLIFFNLLAVLSYLKFFNCQKHSPFSLSWWFWLTLTGVACSCAVGIKYMGVFTYVLVLGVAAVHAWHLLGDQTLSNVGADVQCCMRPACMGQMQMSQGVCVFCHLLARAVALLVIPVVLYLLFFYVHLILVFRSGPHDQIMSSAFQASLEGGLARITQGQPLEVAFGSQVTLRNVFGKPVPCWLHSHQDTYPMIYENGRGSSHQQQVTCYPFKDVNNWWIVKDPRRHQLVVSSPPRPVRHGDMVQLVHGMTTRSLNTHDVAAPLSPHSQEVSCYIDYNISMPAQNLWRLEIVNRGSDTDVWKTILSEVRFVHVNTSAVLKLSGAHLPDWGYRQLEIVGEKLSRGYHGSTVWNVEEHRYGASQEQRERERELHSPAQVDVSRNLSFMARFSELQWRMLALRSDDSEHKYSSSPLEWVTLDTNIAYWLHPRTSAQIHLLGNIVIWVSGSLALAIYALLSLWYLLRRRRNVHDLPQDAWLRWVLAGALCAGGWAVNYLPFFLMEKTLFLYHYLPALTFQILLLPVVLQHISDHLCRSQLQRSIFSALVVAWYSSACHVSNTLRPLTYGDKSLSPHELKALRWKDSWDILIRKH</sequence>
<keyword id="KW-0025">Alternative splicing</keyword>
<keyword id="KW-0912">Congenital muscular dystrophy</keyword>
<keyword id="KW-0225">Disease variant</keyword>
<keyword id="KW-1215">Dystroglycanopathy</keyword>
<keyword id="KW-0256">Endoplasmic reticulum</keyword>
<keyword id="KW-0325">Glycoprotein</keyword>
<keyword id="KW-0328">Glycosyltransferase</keyword>
<keyword id="KW-0947">Limb-girdle muscular dystrophy</keyword>
<keyword id="KW-0451">Lissencephaly</keyword>
<keyword id="KW-0472">Membrane</keyword>
<keyword id="KW-0479">Metal-binding</keyword>
<keyword id="KW-1267">Proteomics identification</keyword>
<keyword id="KW-1185">Reference proteome</keyword>
<keyword id="KW-0677">Repeat</keyword>
<keyword id="KW-0808">Transferase</keyword>
<keyword id="KW-0812">Transmembrane</keyword>
<keyword id="KW-1133">Transmembrane helix</keyword>
<protein>
    <recommendedName>
        <fullName>Protein O-mannosyl-transferase 1</fullName>
        <ecNumber evidence="5 14">2.4.1.109</ecNumber>
    </recommendedName>
    <alternativeName>
        <fullName>Dolichyl-phosphate-mannose--protein mannosyltransferase 1</fullName>
    </alternativeName>
</protein>
<proteinExistence type="evidence at protein level"/>
<organism>
    <name type="scientific">Homo sapiens</name>
    <name type="common">Human</name>
    <dbReference type="NCBI Taxonomy" id="9606"/>
    <lineage>
        <taxon>Eukaryota</taxon>
        <taxon>Metazoa</taxon>
        <taxon>Chordata</taxon>
        <taxon>Craniata</taxon>
        <taxon>Vertebrata</taxon>
        <taxon>Euteleostomi</taxon>
        <taxon>Mammalia</taxon>
        <taxon>Eutheria</taxon>
        <taxon>Euarchontoglires</taxon>
        <taxon>Primates</taxon>
        <taxon>Haplorrhini</taxon>
        <taxon>Catarrhini</taxon>
        <taxon>Hominidae</taxon>
        <taxon>Homo</taxon>
    </lineage>
</organism>
<feature type="chain" id="PRO_0000121484" description="Protein O-mannosyl-transferase 1">
    <location>
        <begin position="1"/>
        <end position="747"/>
    </location>
</feature>
<feature type="transmembrane region" description="Helical" evidence="1">
    <location>
        <begin position="8"/>
        <end position="28"/>
    </location>
</feature>
<feature type="transmembrane region" description="Helical" evidence="1">
    <location>
        <begin position="40"/>
        <end position="60"/>
    </location>
</feature>
<feature type="transmembrane region" description="Helical" evidence="1">
    <location>
        <begin position="68"/>
        <end position="88"/>
    </location>
</feature>
<feature type="transmembrane region" description="Helical" evidence="1">
    <location>
        <begin position="99"/>
        <end position="119"/>
    </location>
</feature>
<feature type="transmembrane region" description="Helical" evidence="1">
    <location>
        <begin position="122"/>
        <end position="142"/>
    </location>
</feature>
<feature type="transmembrane region" description="Helical" evidence="1">
    <location>
        <begin position="154"/>
        <end position="174"/>
    </location>
</feature>
<feature type="transmembrane region" description="Helical" evidence="1">
    <location>
        <begin position="183"/>
        <end position="203"/>
    </location>
</feature>
<feature type="transmembrane region" description="Helical" evidence="1">
    <location>
        <begin position="206"/>
        <end position="226"/>
    </location>
</feature>
<feature type="transmembrane region" description="Helical" evidence="1">
    <location>
        <begin position="269"/>
        <end position="289"/>
    </location>
</feature>
<feature type="transmembrane region" description="Helical" evidence="1">
    <location>
        <begin position="597"/>
        <end position="617"/>
    </location>
</feature>
<feature type="transmembrane region" description="Helical" evidence="1">
    <location>
        <begin position="636"/>
        <end position="656"/>
    </location>
</feature>
<feature type="transmembrane region" description="Helical" evidence="1">
    <location>
        <begin position="661"/>
        <end position="681"/>
    </location>
</feature>
<feature type="domain" description="MIR 1" evidence="2">
    <location>
        <begin position="318"/>
        <end position="381"/>
    </location>
</feature>
<feature type="domain" description="MIR 2" evidence="2">
    <location>
        <begin position="392"/>
        <end position="449"/>
    </location>
</feature>
<feature type="domain" description="MIR 3" evidence="2">
    <location>
        <begin position="453"/>
        <end position="513"/>
    </location>
</feature>
<feature type="glycosylation site" description="N-linked (GlcNAc...) asparagine" evidence="1">
    <location>
        <position position="435"/>
    </location>
</feature>
<feature type="glycosylation site" description="N-linked (GlcNAc...) asparagine" evidence="12">
    <location>
        <position position="471"/>
    </location>
</feature>
<feature type="glycosylation site" description="N-linked (GlcNAc...) asparagine" evidence="1">
    <location>
        <position position="539"/>
    </location>
</feature>
<feature type="splice variant" id="VSP_041024" description="In isoform 4." evidence="16">
    <location>
        <begin position="1"/>
        <end position="117"/>
    </location>
</feature>
<feature type="splice variant" id="VSP_007590" description="In isoform 3." evidence="18">
    <location>
        <begin position="1"/>
        <end position="54"/>
    </location>
</feature>
<feature type="splice variant" id="VSP_007591" description="In isoform 2, isoform 3 and isoform 4." evidence="15 16 17 18">
    <location>
        <begin position="234"/>
        <end position="255"/>
    </location>
</feature>
<feature type="sequence variant" id="VAR_065027" description="In MDDGB1; dbSNP:rs119462983." evidence="10 11 13">
    <original>G</original>
    <variation>R</variation>
    <location>
        <position position="65"/>
    </location>
</feature>
<feature type="sequence variant" id="VAR_015734" description="In MDDGA1; dbSNP:rs28941782." evidence="4">
    <original>G</original>
    <variation>R</variation>
    <location>
        <position position="76"/>
    </location>
</feature>
<feature type="sequence variant" id="VAR_065028" description="In MDDGA1; severe Walker-Warburg syndrome; dbSNP:rs1289335417." evidence="10">
    <original>R</original>
    <variation>C</variation>
    <location>
        <position position="105"/>
    </location>
</feature>
<feature type="sequence variant" id="VAR_065029" description="In MDDGA1; severe Walker-Warburg syndrome; dbSNP:rs1554772469." evidence="10">
    <original>R</original>
    <variation>H</variation>
    <location>
        <position position="105"/>
    </location>
</feature>
<feature type="sequence variant" id="VAR_065030" description="In MDDGB1; dbSNP:rs587777820." evidence="10">
    <location>
        <position position="140"/>
    </location>
</feature>
<feature type="sequence variant" id="VAR_022661" description="In MDDGC1; a common founder mutation; dbSNP:rs119462982." evidence="9">
    <original>A</original>
    <variation>P</variation>
    <location>
        <position position="200"/>
    </location>
</feature>
<feature type="sequence variant" id="VAR_065031" description="In MDDGA1; severe Walker-Warburg syndrome." evidence="10">
    <original>G</original>
    <variation>V</variation>
    <location>
        <position position="207"/>
    </location>
</feature>
<feature type="sequence variant" id="VAR_034390" description="In dbSNP:rs2296949." evidence="3 6">
    <original>Q</original>
    <variation>R</variation>
    <location>
        <position position="251"/>
    </location>
</feature>
<feature type="sequence variant" id="VAR_034389" description="Requires 2 nucleotide substitutions; dbSNP:rs386738991.">
    <original>Q</original>
    <variation>W</variation>
    <location>
        <position position="251"/>
    </location>
</feature>
<feature type="sequence variant" id="VAR_065032" description="In dbSNP:rs201073763." evidence="10">
    <original>L</original>
    <variation>F</variation>
    <location>
        <position position="285"/>
    </location>
</feature>
<feature type="sequence variant" id="VAR_034391" description="In dbSNP:rs4740164.">
    <original>V</original>
    <variation>I</variation>
    <location>
        <position position="327"/>
    </location>
</feature>
<feature type="sequence variant" id="VAR_022662" description="In MDDGA1; loss of function of alpha dystroglycan as a matrix receptor." evidence="7">
    <location>
        <position position="421"/>
    </location>
</feature>
<feature type="sequence variant" id="VAR_015735" description="In MDDGA1." evidence="4">
    <original>V</original>
    <variation>D</variation>
    <location>
        <position position="428"/>
    </location>
</feature>
<feature type="sequence variant" id="VAR_034392" description="In dbSNP:rs11243406.">
    <original>D</original>
    <variation>E</variation>
    <location>
        <position position="433"/>
    </location>
</feature>
<feature type="sequence variant" id="VAR_065033" description="In dbSNP:rs117985576." evidence="10">
    <original>R</original>
    <variation>K</variation>
    <location>
        <position position="522"/>
    </location>
</feature>
<feature type="sequence variant" id="VAR_026697" description="In MDDGA1 and MDDGB1; likely benign; dbSNP:rs150367385." evidence="8 13">
    <original>S</original>
    <variation>R</variation>
    <location>
        <position position="537"/>
    </location>
</feature>
<feature type="sequence variant" id="VAR_065034" description="In MDDGB1; dbSNP:rs119462984." evidence="10">
    <original>W</original>
    <variation>C</variation>
    <location>
        <position position="582"/>
    </location>
</feature>
<feature type="sequence variant" id="VAR_065035" description="In MDDGB1; dbSNP:rs119462986." evidence="10 11">
    <original>Q</original>
    <variation>H</variation>
    <location>
        <position position="590"/>
    </location>
</feature>
<feature type="sequence variant" id="VAR_065036" description="In MDDGB1; dbSNP:rs119462987." evidence="11">
    <original>A</original>
    <variation>T</variation>
    <location>
        <position position="669"/>
    </location>
</feature>
<feature type="sequence conflict" description="In Ref. 6; AAH22877." evidence="19" ref="6">
    <original>P</original>
    <variation>Q</variation>
    <location>
        <position position="37"/>
    </location>
</feature>
<feature type="sequence conflict" description="In Ref. 1; AAD41245." evidence="19" ref="1">
    <original>E</original>
    <variation>K</variation>
    <location>
        <position position="143"/>
    </location>
</feature>
<feature type="sequence conflict" description="In Ref. 2; BAG58462." evidence="19" ref="2">
    <original>I</original>
    <variation>V</variation>
    <location>
        <position position="147"/>
    </location>
</feature>
<feature type="sequence conflict" description="In Ref. 6; AAH22877." evidence="19" ref="6">
    <original>K</original>
    <variation>E</variation>
    <location>
        <position position="178"/>
    </location>
</feature>
<feature type="sequence conflict" description="In Ref. 6; AAH22877." evidence="19" ref="6">
    <original>I</original>
    <variation>V</variation>
    <location>
        <position position="377"/>
    </location>
</feature>
<feature type="sequence conflict" description="In Ref. 3; BAC11269." evidence="19" ref="3">
    <original>H</original>
    <variation>L</variation>
    <location>
        <position position="665"/>
    </location>
</feature>
<feature type="sequence conflict" description="In Ref. 1; AAD41245." evidence="19" ref="1">
    <original>SI</original>
    <variation>NS</variation>
    <location>
        <begin position="696"/>
        <end position="697"/>
    </location>
</feature>
<feature type="sequence conflict" description="In Ref. 2; BAA91135." evidence="19" ref="2">
    <original>S</original>
    <variation>G</variation>
    <location>
        <position position="739"/>
    </location>
</feature>
<name>POMT1_HUMAN</name>
<accession>Q9Y6A1</accession>
<accession>B3KQG0</accession>
<accession>B4DIF0</accession>
<accession>Q5JT01</accession>
<accession>Q5JT06</accession>
<accession>Q5JT08</accession>
<accession>Q8NC91</accession>
<accession>Q8TCA9</accession>
<accession>Q9NX32</accession>
<accession>Q9NX82</accession>
<accession>Q9UNT2</accession>
<evidence type="ECO:0000255" key="1"/>
<evidence type="ECO:0000255" key="2">
    <source>
        <dbReference type="PROSITE-ProRule" id="PRU00131"/>
    </source>
</evidence>
<evidence type="ECO:0000269" key="3">
    <source>
    </source>
</evidence>
<evidence type="ECO:0000269" key="4">
    <source>
    </source>
</evidence>
<evidence type="ECO:0000269" key="5">
    <source>
    </source>
</evidence>
<evidence type="ECO:0000269" key="6">
    <source>
    </source>
</evidence>
<evidence type="ECO:0000269" key="7">
    <source>
    </source>
</evidence>
<evidence type="ECO:0000269" key="8">
    <source>
    </source>
</evidence>
<evidence type="ECO:0000269" key="9">
    <source>
    </source>
</evidence>
<evidence type="ECO:0000269" key="10">
    <source>
    </source>
</evidence>
<evidence type="ECO:0000269" key="11">
    <source>
    </source>
</evidence>
<evidence type="ECO:0000269" key="12">
    <source>
    </source>
</evidence>
<evidence type="ECO:0000269" key="13">
    <source>
    </source>
</evidence>
<evidence type="ECO:0000269" key="14">
    <source>
    </source>
</evidence>
<evidence type="ECO:0000303" key="15">
    <source>
    </source>
</evidence>
<evidence type="ECO:0000303" key="16">
    <source>
    </source>
</evidence>
<evidence type="ECO:0000303" key="17">
    <source>
    </source>
</evidence>
<evidence type="ECO:0000303" key="18">
    <source>
    </source>
</evidence>
<evidence type="ECO:0000305" key="19"/>
<comment type="function">
    <text evidence="4 5 14">Transfers mannosyl residues to the hydroxyl group of serine or threonine residues. Coexpression of both POMT1 and POMT2 is necessary for enzyme activity, expression of either POMT1 or POMT2 alone is insufficient (PubMed:12369018, PubMed:14699049, PubMed:28512129). Essentially dedicated to O-mannosylation of alpha-DAG1 and few other proteins but not of cadherins and protocaherins (PubMed:28512129).</text>
</comment>
<comment type="catalytic activity">
    <reaction evidence="5 14">
        <text>a di-trans,poly-cis-dolichyl beta-D-mannosyl phosphate + L-seryl-[protein] = 3-O-(alpha-D-mannosyl)-L-seryl-[protein] + a di-trans,poly-cis-dolichyl phosphate + H(+)</text>
        <dbReference type="Rhea" id="RHEA:17377"/>
        <dbReference type="Rhea" id="RHEA-COMP:9863"/>
        <dbReference type="Rhea" id="RHEA-COMP:13546"/>
        <dbReference type="Rhea" id="RHEA-COMP:19498"/>
        <dbReference type="Rhea" id="RHEA-COMP:19501"/>
        <dbReference type="ChEBI" id="CHEBI:15378"/>
        <dbReference type="ChEBI" id="CHEBI:29999"/>
        <dbReference type="ChEBI" id="CHEBI:57683"/>
        <dbReference type="ChEBI" id="CHEBI:58211"/>
        <dbReference type="ChEBI" id="CHEBI:137321"/>
        <dbReference type="EC" id="2.4.1.109"/>
    </reaction>
</comment>
<comment type="catalytic activity">
    <reaction evidence="5 14">
        <text>a di-trans,poly-cis-dolichyl beta-D-mannosyl phosphate + L-threonyl-[protein] = 3-O-(alpha-D-mannosyl)-L-threonyl-[protein] + a di-trans,poly-cis-dolichyl phosphate + H(+)</text>
        <dbReference type="Rhea" id="RHEA:53396"/>
        <dbReference type="Rhea" id="RHEA-COMP:11060"/>
        <dbReference type="Rhea" id="RHEA-COMP:13547"/>
        <dbReference type="Rhea" id="RHEA-COMP:19498"/>
        <dbReference type="Rhea" id="RHEA-COMP:19501"/>
        <dbReference type="ChEBI" id="CHEBI:15378"/>
        <dbReference type="ChEBI" id="CHEBI:30013"/>
        <dbReference type="ChEBI" id="CHEBI:57683"/>
        <dbReference type="ChEBI" id="CHEBI:58211"/>
        <dbReference type="ChEBI" id="CHEBI:137323"/>
        <dbReference type="EC" id="2.4.1.109"/>
    </reaction>
</comment>
<comment type="activity regulation">
    <text evidence="5">Slightly activated by Mg(2+) and inhibited by both Ca(+) and Mn(2+). EDTA ha no effect on activity in vitro.</text>
</comment>
<comment type="pathway">
    <text>Protein modification; protein glycosylation.</text>
</comment>
<comment type="subunit">
    <text evidence="19">Interacts with POMT2.</text>
</comment>
<comment type="interaction">
    <interactant intactId="EBI-12337033">
        <id>Q9Y6A1-2</id>
    </interactant>
    <interactant intactId="EBI-16439278">
        <id>Q6FHY5</id>
        <label>MEOX2</label>
    </interactant>
    <organismsDiffer>false</organismsDiffer>
    <experiments>3</experiments>
</comment>
<comment type="subcellular location">
    <subcellularLocation>
        <location evidence="5">Endoplasmic reticulum membrane</location>
        <topology evidence="5">Multi-pass membrane protein</topology>
    </subcellularLocation>
</comment>
<comment type="alternative products">
    <event type="alternative splicing"/>
    <isoform>
        <id>Q9Y6A1-1</id>
        <name>1</name>
        <sequence type="displayed"/>
    </isoform>
    <isoform>
        <id>Q9Y6A1-2</id>
        <name>2</name>
        <sequence type="described" ref="VSP_007591"/>
    </isoform>
    <isoform>
        <id>Q9Y6A1-3</id>
        <name>3</name>
        <sequence type="described" ref="VSP_007590 VSP_007591"/>
    </isoform>
    <isoform>
        <id>Q9Y6A1-4</id>
        <name>4</name>
        <sequence type="described" ref="VSP_041024 VSP_007591"/>
    </isoform>
    <text>Additional isoforms seem to exist.</text>
</comment>
<comment type="tissue specificity">
    <text>Widely expressed. Highly expressed in testis, heart and pancreas. Detected at lower levels in kidney, skeletal muscle, brain, placenta, lung and liver.</text>
</comment>
<comment type="disease" evidence="10 11 13">
    <disease id="DI-02963">
        <name>Muscular dystrophy-dystroglycanopathy congenital with impaired intellectual development B1</name>
        <acronym>MDDGB1</acronym>
        <description>An autosomal recessive disorder characterized by congenital muscular dystrophy associated with intellectual disability and mild structural brain abnormalities.</description>
        <dbReference type="MIM" id="613155"/>
    </disease>
    <text>The disease is caused by variants affecting the gene represented in this entry.</text>
</comment>
<comment type="disease" evidence="4 7 8 10">
    <disease id="DI-01132">
        <name>Muscular dystrophy-dystroglycanopathy congenital with brain and eye anomalies A1</name>
        <acronym>MDDGA1</acronym>
        <description>An autosomal recessive disorder characterized by congenital muscular dystrophy associated with cobblestone lissencephaly and other brain anomalies, eye malformations, profound intellectual disability, and death usually in the first years of life. Included diseases are the more severe Walker-Warburg syndrome and the slightly less severe muscle-eye-brain disease.</description>
        <dbReference type="MIM" id="236670"/>
    </disease>
    <text>The disease is caused by variants affecting the gene represented in this entry.</text>
</comment>
<comment type="disease" evidence="9">
    <disease id="DI-00668">
        <name>Muscular dystrophy-dystroglycanopathy limb-girdle C1</name>
        <acronym>MDDGC1</acronym>
        <description>An autosomal recessive degenerative myopathy associated with mild intellectual disability without any obvious structural brain abnormality. An abnormal alpha-dystroglycan pattern in observed in the muscle.</description>
        <dbReference type="MIM" id="609308"/>
    </disease>
    <text>The disease is caused by variants affecting the gene represented in this entry.</text>
</comment>
<comment type="similarity">
    <text evidence="19">Belongs to the glycosyltransferase 39 family.</text>
</comment>
<comment type="sequence caution" evidence="19">
    <conflict type="erroneous initiation">
        <sequence resource="EMBL-CDS" id="BAA91135"/>
    </conflict>
    <text>Truncated N-terminus.</text>
</comment>
<comment type="sequence caution" evidence="19">
    <conflict type="erroneous initiation">
        <sequence resource="EMBL-CDS" id="BAA91190"/>
    </conflict>
    <text>Truncated N-terminus.</text>
</comment>
<dbReference type="EC" id="2.4.1.109" evidence="5 14"/>
<dbReference type="EMBL" id="AF095136">
    <property type="protein sequence ID" value="AAD41245.1"/>
    <property type="molecule type" value="mRNA"/>
</dbReference>
<dbReference type="EMBL" id="AF095150">
    <property type="protein sequence ID" value="AAD41246.1"/>
    <property type="molecule type" value="Genomic_DNA"/>
</dbReference>
<dbReference type="EMBL" id="AF095138">
    <property type="protein sequence ID" value="AAD41246.1"/>
    <property type="status" value="JOINED"/>
    <property type="molecule type" value="Genomic_DNA"/>
</dbReference>
<dbReference type="EMBL" id="AF095139">
    <property type="protein sequence ID" value="AAD41246.1"/>
    <property type="status" value="JOINED"/>
    <property type="molecule type" value="Genomic_DNA"/>
</dbReference>
<dbReference type="EMBL" id="AF095140">
    <property type="protein sequence ID" value="AAD41246.1"/>
    <property type="status" value="JOINED"/>
    <property type="molecule type" value="Genomic_DNA"/>
</dbReference>
<dbReference type="EMBL" id="AF095141">
    <property type="protein sequence ID" value="AAD41246.1"/>
    <property type="status" value="JOINED"/>
    <property type="molecule type" value="Genomic_DNA"/>
</dbReference>
<dbReference type="EMBL" id="AF095142">
    <property type="protein sequence ID" value="AAD41246.1"/>
    <property type="status" value="JOINED"/>
    <property type="molecule type" value="Genomic_DNA"/>
</dbReference>
<dbReference type="EMBL" id="AF095143">
    <property type="protein sequence ID" value="AAD41246.1"/>
    <property type="status" value="JOINED"/>
    <property type="molecule type" value="Genomic_DNA"/>
</dbReference>
<dbReference type="EMBL" id="AF095144">
    <property type="protein sequence ID" value="AAD41246.1"/>
    <property type="status" value="JOINED"/>
    <property type="molecule type" value="Genomic_DNA"/>
</dbReference>
<dbReference type="EMBL" id="AF095145">
    <property type="protein sequence ID" value="AAD41246.1"/>
    <property type="status" value="JOINED"/>
    <property type="molecule type" value="Genomic_DNA"/>
</dbReference>
<dbReference type="EMBL" id="AF095146">
    <property type="protein sequence ID" value="AAD41246.1"/>
    <property type="status" value="JOINED"/>
    <property type="molecule type" value="Genomic_DNA"/>
</dbReference>
<dbReference type="EMBL" id="AF095147">
    <property type="protein sequence ID" value="AAD41246.1"/>
    <property type="status" value="JOINED"/>
    <property type="molecule type" value="Genomic_DNA"/>
</dbReference>
<dbReference type="EMBL" id="AF095148">
    <property type="protein sequence ID" value="AAD41246.1"/>
    <property type="status" value="JOINED"/>
    <property type="molecule type" value="Genomic_DNA"/>
</dbReference>
<dbReference type="EMBL" id="AF095149">
    <property type="protein sequence ID" value="AAD41246.1"/>
    <property type="status" value="JOINED"/>
    <property type="molecule type" value="Genomic_DNA"/>
</dbReference>
<dbReference type="EMBL" id="AK000391">
    <property type="protein sequence ID" value="BAA91135.1"/>
    <property type="status" value="ALT_INIT"/>
    <property type="molecule type" value="mRNA"/>
</dbReference>
<dbReference type="EMBL" id="AK000475">
    <property type="protein sequence ID" value="BAA91190.1"/>
    <property type="status" value="ALT_INIT"/>
    <property type="molecule type" value="mRNA"/>
</dbReference>
<dbReference type="EMBL" id="AK295561">
    <property type="protein sequence ID" value="BAG58462.1"/>
    <property type="molecule type" value="mRNA"/>
</dbReference>
<dbReference type="EMBL" id="AK074874">
    <property type="protein sequence ID" value="BAG52022.1"/>
    <property type="molecule type" value="mRNA"/>
</dbReference>
<dbReference type="EMBL" id="AK074888">
    <property type="protein sequence ID" value="BAC11269.1"/>
    <property type="molecule type" value="mRNA"/>
</dbReference>
<dbReference type="EMBL" id="AL358781">
    <property type="status" value="NOT_ANNOTATED_CDS"/>
    <property type="molecule type" value="Genomic_DNA"/>
</dbReference>
<dbReference type="EMBL" id="CH471090">
    <property type="protein sequence ID" value="EAW87978.1"/>
    <property type="molecule type" value="Genomic_DNA"/>
</dbReference>
<dbReference type="EMBL" id="BC022877">
    <property type="protein sequence ID" value="AAH22877.3"/>
    <property type="molecule type" value="mRNA"/>
</dbReference>
<dbReference type="EMBL" id="BC065268">
    <property type="protein sequence ID" value="AAH65268.1"/>
    <property type="molecule type" value="mRNA"/>
</dbReference>
<dbReference type="CCDS" id="CCDS43894.1">
    <molecule id="Q9Y6A1-2"/>
</dbReference>
<dbReference type="CCDS" id="CCDS43895.1">
    <molecule id="Q9Y6A1-3"/>
</dbReference>
<dbReference type="CCDS" id="CCDS48045.1">
    <molecule id="Q9Y6A1-4"/>
</dbReference>
<dbReference type="CCDS" id="CCDS6943.1">
    <molecule id="Q9Y6A1-1"/>
</dbReference>
<dbReference type="RefSeq" id="NP_001070833.1">
    <molecule id="Q9Y6A1-2"/>
    <property type="nucleotide sequence ID" value="NM_001077365.2"/>
</dbReference>
<dbReference type="RefSeq" id="NP_001070834.1">
    <molecule id="Q9Y6A1-3"/>
    <property type="nucleotide sequence ID" value="NM_001077366.2"/>
</dbReference>
<dbReference type="RefSeq" id="NP_001129585.1">
    <molecule id="Q9Y6A1-2"/>
    <property type="nucleotide sequence ID" value="NM_001136113.2"/>
</dbReference>
<dbReference type="RefSeq" id="NP_001129586.1">
    <molecule id="Q9Y6A1-4"/>
    <property type="nucleotide sequence ID" value="NM_001136114.2"/>
</dbReference>
<dbReference type="RefSeq" id="NP_001340122.2">
    <molecule id="Q9Y6A1-1"/>
    <property type="nucleotide sequence ID" value="NM_001353193.2"/>
</dbReference>
<dbReference type="RefSeq" id="NP_001340123.1">
    <molecule id="Q9Y6A1-3"/>
    <property type="nucleotide sequence ID" value="NM_001353194.2"/>
</dbReference>
<dbReference type="RefSeq" id="NP_001340124.1">
    <molecule id="Q9Y6A1-4"/>
    <property type="nucleotide sequence ID" value="NM_001353195.2"/>
</dbReference>
<dbReference type="RefSeq" id="NP_001361620.1">
    <molecule id="Q9Y6A1-4"/>
    <property type="nucleotide sequence ID" value="NM_001374691.1"/>
</dbReference>
<dbReference type="RefSeq" id="NP_001361621.1">
    <molecule id="Q9Y6A1-4"/>
    <property type="nucleotide sequence ID" value="NM_001374692.1"/>
</dbReference>
<dbReference type="RefSeq" id="NP_009102.3">
    <molecule id="Q9Y6A1-1"/>
    <property type="nucleotide sequence ID" value="NM_007171.3"/>
</dbReference>
<dbReference type="RefSeq" id="XP_005272213.1">
    <property type="nucleotide sequence ID" value="XM_005272156.1"/>
</dbReference>
<dbReference type="SMR" id="Q9Y6A1"/>
<dbReference type="BioGRID" id="115834">
    <property type="interactions" value="62"/>
</dbReference>
<dbReference type="ComplexPortal" id="CPX-2659">
    <property type="entry name" value="POMT1-POMT2 O-mannosyltransferase complex"/>
</dbReference>
<dbReference type="FunCoup" id="Q9Y6A1">
    <property type="interactions" value="860"/>
</dbReference>
<dbReference type="IntAct" id="Q9Y6A1">
    <property type="interactions" value="44"/>
</dbReference>
<dbReference type="STRING" id="9606.ENSP00000361302"/>
<dbReference type="CAZy" id="GT39">
    <property type="family name" value="Glycosyltransferase Family 39"/>
</dbReference>
<dbReference type="GlyCosmos" id="Q9Y6A1">
    <property type="glycosylation" value="3 sites, No reported glycans"/>
</dbReference>
<dbReference type="GlyGen" id="Q9Y6A1">
    <property type="glycosylation" value="5 sites, 7 N-linked glycans (4 sites), 1 O-linked glycan (1 site)"/>
</dbReference>
<dbReference type="iPTMnet" id="Q9Y6A1"/>
<dbReference type="PhosphoSitePlus" id="Q9Y6A1"/>
<dbReference type="SwissPalm" id="Q9Y6A1"/>
<dbReference type="BioMuta" id="POMT1"/>
<dbReference type="DMDM" id="332278226"/>
<dbReference type="jPOST" id="Q9Y6A1"/>
<dbReference type="MassIVE" id="Q9Y6A1"/>
<dbReference type="PaxDb" id="9606-ENSP00000361302"/>
<dbReference type="PeptideAtlas" id="Q9Y6A1"/>
<dbReference type="ProteomicsDB" id="86636">
    <molecule id="Q9Y6A1-1"/>
</dbReference>
<dbReference type="ProteomicsDB" id="86637">
    <molecule id="Q9Y6A1-2"/>
</dbReference>
<dbReference type="ProteomicsDB" id="86638">
    <molecule id="Q9Y6A1-3"/>
</dbReference>
<dbReference type="ProteomicsDB" id="86639">
    <molecule id="Q9Y6A1-4"/>
</dbReference>
<dbReference type="Pumba" id="Q9Y6A1"/>
<dbReference type="Antibodypedia" id="31602">
    <property type="antibodies" value="192 antibodies from 27 providers"/>
</dbReference>
<dbReference type="DNASU" id="10585"/>
<dbReference type="Ensembl" id="ENST00000341012.13">
    <molecule id="Q9Y6A1-3"/>
    <property type="protein sequence ID" value="ENSP00000343034.7"/>
    <property type="gene ID" value="ENSG00000130714.19"/>
</dbReference>
<dbReference type="Ensembl" id="ENST00000372228.9">
    <molecule id="Q9Y6A1-1"/>
    <property type="protein sequence ID" value="ENSP00000361302.3"/>
    <property type="gene ID" value="ENSG00000130714.19"/>
</dbReference>
<dbReference type="Ensembl" id="ENST00000402686.8">
    <molecule id="Q9Y6A1-2"/>
    <property type="protein sequence ID" value="ENSP00000385797.4"/>
    <property type="gene ID" value="ENSG00000130714.19"/>
</dbReference>
<dbReference type="Ensembl" id="ENST00000676640.1">
    <molecule id="Q9Y6A1-2"/>
    <property type="protein sequence ID" value="ENSP00000503281.1"/>
    <property type="gene ID" value="ENSG00000130714.19"/>
</dbReference>
<dbReference type="Ensembl" id="ENST00000677216.1">
    <molecule id="Q9Y6A1-4"/>
    <property type="protein sequence ID" value="ENSP00000503772.1"/>
    <property type="gene ID" value="ENSG00000130714.19"/>
</dbReference>
<dbReference type="Ensembl" id="ENST00000679023.1">
    <molecule id="Q9Y6A1-3"/>
    <property type="protein sequence ID" value="ENSP00000503718.1"/>
    <property type="gene ID" value="ENSG00000130714.19"/>
</dbReference>
<dbReference type="Ensembl" id="ENST00000679189.1">
    <molecule id="Q9Y6A1-4"/>
    <property type="protein sequence ID" value="ENSP00000503356.1"/>
    <property type="gene ID" value="ENSG00000130714.19"/>
</dbReference>
<dbReference type="GeneID" id="10585"/>
<dbReference type="KEGG" id="hsa:10585"/>
<dbReference type="MANE-Select" id="ENST00000402686.8">
    <molecule id="Q9Y6A1-2"/>
    <property type="protein sequence ID" value="ENSP00000385797.4"/>
    <property type="RefSeq nucleotide sequence ID" value="NM_001077365.2"/>
    <property type="RefSeq protein sequence ID" value="NP_001070833.1"/>
</dbReference>
<dbReference type="UCSC" id="uc004cau.4">
    <molecule id="Q9Y6A1-1"/>
    <property type="organism name" value="human"/>
</dbReference>
<dbReference type="AGR" id="HGNC:9202"/>
<dbReference type="CTD" id="10585"/>
<dbReference type="DisGeNET" id="10585"/>
<dbReference type="GeneCards" id="POMT1"/>
<dbReference type="HGNC" id="HGNC:9202">
    <property type="gene designation" value="POMT1"/>
</dbReference>
<dbReference type="HPA" id="ENSG00000130714">
    <property type="expression patterns" value="Low tissue specificity"/>
</dbReference>
<dbReference type="MalaCards" id="POMT1"/>
<dbReference type="MIM" id="236670">
    <property type="type" value="phenotype"/>
</dbReference>
<dbReference type="MIM" id="607423">
    <property type="type" value="gene"/>
</dbReference>
<dbReference type="MIM" id="609308">
    <property type="type" value="phenotype"/>
</dbReference>
<dbReference type="MIM" id="613155">
    <property type="type" value="phenotype"/>
</dbReference>
<dbReference type="neXtProt" id="NX_Q9Y6A1"/>
<dbReference type="OpenTargets" id="ENSG00000130714"/>
<dbReference type="Orphanet" id="370959">
    <property type="disease" value="Congenital muscular dystrophy with cerebellar involvement"/>
</dbReference>
<dbReference type="Orphanet" id="370968">
    <property type="disease" value="Congenital muscular dystrophy with intellectual disability"/>
</dbReference>
<dbReference type="Orphanet" id="370980">
    <property type="disease" value="Congenital muscular dystrophy without intellectual disability"/>
</dbReference>
<dbReference type="Orphanet" id="588">
    <property type="disease" value="Muscle-eye-brain disease"/>
</dbReference>
<dbReference type="Orphanet" id="86812">
    <property type="disease" value="POMT1-related limb-girdle muscular dystrophy R11"/>
</dbReference>
<dbReference type="Orphanet" id="899">
    <property type="disease" value="Walker-Warburg syndrome"/>
</dbReference>
<dbReference type="PharmGKB" id="PA33527"/>
<dbReference type="VEuPathDB" id="HostDB:ENSG00000130714"/>
<dbReference type="eggNOG" id="KOG3359">
    <property type="taxonomic scope" value="Eukaryota"/>
</dbReference>
<dbReference type="GeneTree" id="ENSGT00940000158049"/>
<dbReference type="HOGENOM" id="CLU_008438_1_0_1"/>
<dbReference type="InParanoid" id="Q9Y6A1"/>
<dbReference type="OMA" id="NCHLNAP"/>
<dbReference type="OrthoDB" id="292747at2759"/>
<dbReference type="PAN-GO" id="Q9Y6A1">
    <property type="GO annotations" value="0 GO annotations based on evolutionary models"/>
</dbReference>
<dbReference type="PhylomeDB" id="Q9Y6A1"/>
<dbReference type="TreeFam" id="TF300552"/>
<dbReference type="BioCyc" id="MetaCyc:HS05428-MONOMER"/>
<dbReference type="BRENDA" id="2.4.1.109">
    <property type="organism ID" value="2681"/>
</dbReference>
<dbReference type="PathwayCommons" id="Q9Y6A1"/>
<dbReference type="Reactome" id="R-HSA-5083629">
    <property type="pathway name" value="Defective POMT2 causes MDDGA2, MDDGB2 and MDDGC2"/>
</dbReference>
<dbReference type="Reactome" id="R-HSA-5083633">
    <property type="pathway name" value="Defective POMT1 causes MDDGA1, MDDGB1 and MDDGC1"/>
</dbReference>
<dbReference type="Reactome" id="R-HSA-5173105">
    <property type="pathway name" value="O-linked glycosylation"/>
</dbReference>
<dbReference type="SignaLink" id="Q9Y6A1"/>
<dbReference type="SIGNOR" id="Q9Y6A1"/>
<dbReference type="UniPathway" id="UPA00378"/>
<dbReference type="BioGRID-ORCS" id="10585">
    <property type="hits" value="16 hits in 1156 CRISPR screens"/>
</dbReference>
<dbReference type="ChiTaRS" id="POMT1">
    <property type="organism name" value="human"/>
</dbReference>
<dbReference type="GeneWiki" id="POMT1"/>
<dbReference type="GenomeRNAi" id="10585"/>
<dbReference type="Pharos" id="Q9Y6A1">
    <property type="development level" value="Tbio"/>
</dbReference>
<dbReference type="PRO" id="PR:Q9Y6A1"/>
<dbReference type="Proteomes" id="UP000005640">
    <property type="component" value="Chromosome 9"/>
</dbReference>
<dbReference type="RNAct" id="Q9Y6A1">
    <property type="molecule type" value="protein"/>
</dbReference>
<dbReference type="Bgee" id="ENSG00000130714">
    <property type="expression patterns" value="Expressed in right hemisphere of cerebellum and 178 other cell types or tissues"/>
</dbReference>
<dbReference type="ExpressionAtlas" id="Q9Y6A1">
    <property type="expression patterns" value="baseline and differential"/>
</dbReference>
<dbReference type="GO" id="GO:0001669">
    <property type="term" value="C:acrosomal vesicle"/>
    <property type="evidence" value="ECO:0007669"/>
    <property type="project" value="Ensembl"/>
</dbReference>
<dbReference type="GO" id="GO:0031502">
    <property type="term" value="C:dolichyl-phosphate-mannose-protein mannosyltransferase complex"/>
    <property type="evidence" value="ECO:0007669"/>
    <property type="project" value="Ensembl"/>
</dbReference>
<dbReference type="GO" id="GO:0005783">
    <property type="term" value="C:endoplasmic reticulum"/>
    <property type="evidence" value="ECO:0000304"/>
    <property type="project" value="ProtInc"/>
</dbReference>
<dbReference type="GO" id="GO:0005789">
    <property type="term" value="C:endoplasmic reticulum membrane"/>
    <property type="evidence" value="ECO:0000314"/>
    <property type="project" value="UniProtKB"/>
</dbReference>
<dbReference type="GO" id="GO:0016020">
    <property type="term" value="C:membrane"/>
    <property type="evidence" value="ECO:0000304"/>
    <property type="project" value="ProtInc"/>
</dbReference>
<dbReference type="GO" id="GO:0016529">
    <property type="term" value="C:sarcoplasmic reticulum"/>
    <property type="evidence" value="ECO:0007669"/>
    <property type="project" value="Ensembl"/>
</dbReference>
<dbReference type="GO" id="GO:0004169">
    <property type="term" value="F:dolichyl-phosphate-mannose-protein mannosyltransferase activity"/>
    <property type="evidence" value="ECO:0007669"/>
    <property type="project" value="UniProtKB-EC"/>
</dbReference>
<dbReference type="GO" id="GO:0000030">
    <property type="term" value="F:mannosyltransferase activity"/>
    <property type="evidence" value="ECO:0000315"/>
    <property type="project" value="UniProtKB"/>
</dbReference>
<dbReference type="GO" id="GO:0046872">
    <property type="term" value="F:metal ion binding"/>
    <property type="evidence" value="ECO:0007669"/>
    <property type="project" value="UniProtKB-KW"/>
</dbReference>
<dbReference type="GO" id="GO:0030198">
    <property type="term" value="P:extracellular matrix organization"/>
    <property type="evidence" value="ECO:0007669"/>
    <property type="project" value="Ensembl"/>
</dbReference>
<dbReference type="GO" id="GO:0006493">
    <property type="term" value="P:protein O-linked glycosylation"/>
    <property type="evidence" value="ECO:0000304"/>
    <property type="project" value="ProtInc"/>
</dbReference>
<dbReference type="GO" id="GO:0035269">
    <property type="term" value="P:protein O-linked mannosylation"/>
    <property type="evidence" value="ECO:0000315"/>
    <property type="project" value="UniProtKB"/>
</dbReference>
<dbReference type="CDD" id="cd23281">
    <property type="entry name" value="beta-trefoil_MIR_POMT1"/>
    <property type="match status" value="1"/>
</dbReference>
<dbReference type="FunFam" id="2.80.10.50:FF:000012">
    <property type="entry name" value="Protein O-mannosyl-transferase 1"/>
    <property type="match status" value="1"/>
</dbReference>
<dbReference type="Gene3D" id="2.80.10.50">
    <property type="match status" value="1"/>
</dbReference>
<dbReference type="InterPro" id="IPR027005">
    <property type="entry name" value="GlyclTrfase_39-like"/>
</dbReference>
<dbReference type="InterPro" id="IPR003342">
    <property type="entry name" value="Glyco_trans_39/83"/>
</dbReference>
<dbReference type="InterPro" id="IPR036300">
    <property type="entry name" value="MIR_dom_sf"/>
</dbReference>
<dbReference type="InterPro" id="IPR016093">
    <property type="entry name" value="MIR_motif"/>
</dbReference>
<dbReference type="InterPro" id="IPR032421">
    <property type="entry name" value="PMT_4TMC"/>
</dbReference>
<dbReference type="PANTHER" id="PTHR10050">
    <property type="entry name" value="DOLICHYL-PHOSPHATE-MANNOSE--PROTEIN MANNOSYLTRANSFERASE"/>
    <property type="match status" value="1"/>
</dbReference>
<dbReference type="PANTHER" id="PTHR10050:SF51">
    <property type="entry name" value="PROTEIN O-MANNOSYL-TRANSFERASE 1"/>
    <property type="match status" value="1"/>
</dbReference>
<dbReference type="Pfam" id="PF02815">
    <property type="entry name" value="MIR"/>
    <property type="match status" value="1"/>
</dbReference>
<dbReference type="Pfam" id="PF02366">
    <property type="entry name" value="PMT"/>
    <property type="match status" value="1"/>
</dbReference>
<dbReference type="Pfam" id="PF16192">
    <property type="entry name" value="PMT_4TMC"/>
    <property type="match status" value="1"/>
</dbReference>
<dbReference type="SMART" id="SM00472">
    <property type="entry name" value="MIR"/>
    <property type="match status" value="3"/>
</dbReference>
<dbReference type="SUPFAM" id="SSF82109">
    <property type="entry name" value="MIR domain"/>
    <property type="match status" value="1"/>
</dbReference>
<dbReference type="PROSITE" id="PS50919">
    <property type="entry name" value="MIR"/>
    <property type="match status" value="3"/>
</dbReference>
<gene>
    <name type="primary">POMT1</name>
</gene>
<reference key="1">
    <citation type="journal article" date="1999" name="Genomics">
        <title>Identification of a human homolog of the Drosophila rotated abdomen gene (POMT1) encoding a putative protein O-mannosyl-transferase, and assignment to human chromosome 9q34.1.</title>
        <authorList>
            <person name="Perez Jurado L.A."/>
            <person name="Coloma A."/>
            <person name="Cruces J."/>
        </authorList>
    </citation>
    <scope>NUCLEOTIDE SEQUENCE [GENOMIC DNA / MRNA] (ISOFORMS 1 AND 2)</scope>
    <scope>ALTERNATIVE SPLICING</scope>
    <scope>VARIANT ARG-251</scope>
    <source>
        <tissue>Fetal brain</tissue>
    </source>
</reference>
<reference key="2">
    <citation type="journal article" date="2004" name="Nat. Genet.">
        <title>Complete sequencing and characterization of 21,243 full-length human cDNAs.</title>
        <authorList>
            <person name="Ota T."/>
            <person name="Suzuki Y."/>
            <person name="Nishikawa T."/>
            <person name="Otsuki T."/>
            <person name="Sugiyama T."/>
            <person name="Irie R."/>
            <person name="Wakamatsu A."/>
            <person name="Hayashi K."/>
            <person name="Sato H."/>
            <person name="Nagai K."/>
            <person name="Kimura K."/>
            <person name="Makita H."/>
            <person name="Sekine M."/>
            <person name="Obayashi M."/>
            <person name="Nishi T."/>
            <person name="Shibahara T."/>
            <person name="Tanaka T."/>
            <person name="Ishii S."/>
            <person name="Yamamoto J."/>
            <person name="Saito K."/>
            <person name="Kawai Y."/>
            <person name="Isono Y."/>
            <person name="Nakamura Y."/>
            <person name="Nagahari K."/>
            <person name="Murakami K."/>
            <person name="Yasuda T."/>
            <person name="Iwayanagi T."/>
            <person name="Wagatsuma M."/>
            <person name="Shiratori A."/>
            <person name="Sudo H."/>
            <person name="Hosoiri T."/>
            <person name="Kaku Y."/>
            <person name="Kodaira H."/>
            <person name="Kondo H."/>
            <person name="Sugawara M."/>
            <person name="Takahashi M."/>
            <person name="Kanda K."/>
            <person name="Yokoi T."/>
            <person name="Furuya T."/>
            <person name="Kikkawa E."/>
            <person name="Omura Y."/>
            <person name="Abe K."/>
            <person name="Kamihara K."/>
            <person name="Katsuta N."/>
            <person name="Sato K."/>
            <person name="Tanikawa M."/>
            <person name="Yamazaki M."/>
            <person name="Ninomiya K."/>
            <person name="Ishibashi T."/>
            <person name="Yamashita H."/>
            <person name="Murakawa K."/>
            <person name="Fujimori K."/>
            <person name="Tanai H."/>
            <person name="Kimata M."/>
            <person name="Watanabe M."/>
            <person name="Hiraoka S."/>
            <person name="Chiba Y."/>
            <person name="Ishida S."/>
            <person name="Ono Y."/>
            <person name="Takiguchi S."/>
            <person name="Watanabe S."/>
            <person name="Yosida M."/>
            <person name="Hotuta T."/>
            <person name="Kusano J."/>
            <person name="Kanehori K."/>
            <person name="Takahashi-Fujii A."/>
            <person name="Hara H."/>
            <person name="Tanase T.-O."/>
            <person name="Nomura Y."/>
            <person name="Togiya S."/>
            <person name="Komai F."/>
            <person name="Hara R."/>
            <person name="Takeuchi K."/>
            <person name="Arita M."/>
            <person name="Imose N."/>
            <person name="Musashino K."/>
            <person name="Yuuki H."/>
            <person name="Oshima A."/>
            <person name="Sasaki N."/>
            <person name="Aotsuka S."/>
            <person name="Yoshikawa Y."/>
            <person name="Matsunawa H."/>
            <person name="Ichihara T."/>
            <person name="Shiohata N."/>
            <person name="Sano S."/>
            <person name="Moriya S."/>
            <person name="Momiyama H."/>
            <person name="Satoh N."/>
            <person name="Takami S."/>
            <person name="Terashima Y."/>
            <person name="Suzuki O."/>
            <person name="Nakagawa S."/>
            <person name="Senoh A."/>
            <person name="Mizoguchi H."/>
            <person name="Goto Y."/>
            <person name="Shimizu F."/>
            <person name="Wakebe H."/>
            <person name="Hishigaki H."/>
            <person name="Watanabe T."/>
            <person name="Sugiyama A."/>
            <person name="Takemoto M."/>
            <person name="Kawakami B."/>
            <person name="Yamazaki M."/>
            <person name="Watanabe K."/>
            <person name="Kumagai A."/>
            <person name="Itakura S."/>
            <person name="Fukuzumi Y."/>
            <person name="Fujimori Y."/>
            <person name="Komiyama M."/>
            <person name="Tashiro H."/>
            <person name="Tanigami A."/>
            <person name="Fujiwara T."/>
            <person name="Ono T."/>
            <person name="Yamada K."/>
            <person name="Fujii Y."/>
            <person name="Ozaki K."/>
            <person name="Hirao M."/>
            <person name="Ohmori Y."/>
            <person name="Kawabata A."/>
            <person name="Hikiji T."/>
            <person name="Kobatake N."/>
            <person name="Inagaki H."/>
            <person name="Ikema Y."/>
            <person name="Okamoto S."/>
            <person name="Okitani R."/>
            <person name="Kawakami T."/>
            <person name="Noguchi S."/>
            <person name="Itoh T."/>
            <person name="Shigeta K."/>
            <person name="Senba T."/>
            <person name="Matsumura K."/>
            <person name="Nakajima Y."/>
            <person name="Mizuno T."/>
            <person name="Morinaga M."/>
            <person name="Sasaki M."/>
            <person name="Togashi T."/>
            <person name="Oyama M."/>
            <person name="Hata H."/>
            <person name="Watanabe M."/>
            <person name="Komatsu T."/>
            <person name="Mizushima-Sugano J."/>
            <person name="Satoh T."/>
            <person name="Shirai Y."/>
            <person name="Takahashi Y."/>
            <person name="Nakagawa K."/>
            <person name="Okumura K."/>
            <person name="Nagase T."/>
            <person name="Nomura N."/>
            <person name="Kikuchi H."/>
            <person name="Masuho Y."/>
            <person name="Yamashita R."/>
            <person name="Nakai K."/>
            <person name="Yada T."/>
            <person name="Nakamura Y."/>
            <person name="Ohara O."/>
            <person name="Isogai T."/>
            <person name="Sugano S."/>
        </authorList>
    </citation>
    <scope>NUCLEOTIDE SEQUENCE [LARGE SCALE MRNA] (ISOFORM 4)</scope>
    <scope>NUCLEOTIDE SEQUENCE [LARGE SCALE MRNA] OF 53-747 (ISOFORM 1)</scope>
    <scope>VARIANT ARG-251</scope>
    <source>
        <tissue>Hippocampus</tissue>
        <tissue>Ileal mucosa</tissue>
        <tissue>Signet-ring cell carcinoma</tissue>
        <tissue>Teratocarcinoma</tissue>
    </source>
</reference>
<reference key="3">
    <citation type="journal article" date="2005" name="DNA Res.">
        <title>Signal sequence and keyword trap in silico for selection of full-length human cDNAs encoding secretion or membrane proteins from oligo-capped cDNA libraries.</title>
        <authorList>
            <person name="Otsuki T."/>
            <person name="Ota T."/>
            <person name="Nishikawa T."/>
            <person name="Hayashi K."/>
            <person name="Suzuki Y."/>
            <person name="Yamamoto J."/>
            <person name="Wakamatsu A."/>
            <person name="Kimura K."/>
            <person name="Sakamoto K."/>
            <person name="Hatano N."/>
            <person name="Kawai Y."/>
            <person name="Ishii S."/>
            <person name="Saito K."/>
            <person name="Kojima S."/>
            <person name="Sugiyama T."/>
            <person name="Ono T."/>
            <person name="Okano K."/>
            <person name="Yoshikawa Y."/>
            <person name="Aotsuka S."/>
            <person name="Sasaki N."/>
            <person name="Hattori A."/>
            <person name="Okumura K."/>
            <person name="Nagai K."/>
            <person name="Sugano S."/>
            <person name="Isogai T."/>
        </authorList>
    </citation>
    <scope>NUCLEOTIDE SEQUENCE [LARGE SCALE MRNA] (ISOFORMS 2 AND 3)</scope>
</reference>
<reference key="4">
    <citation type="journal article" date="2004" name="Nature">
        <title>DNA sequence and analysis of human chromosome 9.</title>
        <authorList>
            <person name="Humphray S.J."/>
            <person name="Oliver K."/>
            <person name="Hunt A.R."/>
            <person name="Plumb R.W."/>
            <person name="Loveland J.E."/>
            <person name="Howe K.L."/>
            <person name="Andrews T.D."/>
            <person name="Searle S."/>
            <person name="Hunt S.E."/>
            <person name="Scott C.E."/>
            <person name="Jones M.C."/>
            <person name="Ainscough R."/>
            <person name="Almeida J.P."/>
            <person name="Ambrose K.D."/>
            <person name="Ashwell R.I.S."/>
            <person name="Babbage A.K."/>
            <person name="Babbage S."/>
            <person name="Bagguley C.L."/>
            <person name="Bailey J."/>
            <person name="Banerjee R."/>
            <person name="Barker D.J."/>
            <person name="Barlow K.F."/>
            <person name="Bates K."/>
            <person name="Beasley H."/>
            <person name="Beasley O."/>
            <person name="Bird C.P."/>
            <person name="Bray-Allen S."/>
            <person name="Brown A.J."/>
            <person name="Brown J.Y."/>
            <person name="Burford D."/>
            <person name="Burrill W."/>
            <person name="Burton J."/>
            <person name="Carder C."/>
            <person name="Carter N.P."/>
            <person name="Chapman J.C."/>
            <person name="Chen Y."/>
            <person name="Clarke G."/>
            <person name="Clark S.Y."/>
            <person name="Clee C.M."/>
            <person name="Clegg S."/>
            <person name="Collier R.E."/>
            <person name="Corby N."/>
            <person name="Crosier M."/>
            <person name="Cummings A.T."/>
            <person name="Davies J."/>
            <person name="Dhami P."/>
            <person name="Dunn M."/>
            <person name="Dutta I."/>
            <person name="Dyer L.W."/>
            <person name="Earthrowl M.E."/>
            <person name="Faulkner L."/>
            <person name="Fleming C.J."/>
            <person name="Frankish A."/>
            <person name="Frankland J.A."/>
            <person name="French L."/>
            <person name="Fricker D.G."/>
            <person name="Garner P."/>
            <person name="Garnett J."/>
            <person name="Ghori J."/>
            <person name="Gilbert J.G.R."/>
            <person name="Glison C."/>
            <person name="Grafham D.V."/>
            <person name="Gribble S."/>
            <person name="Griffiths C."/>
            <person name="Griffiths-Jones S."/>
            <person name="Grocock R."/>
            <person name="Guy J."/>
            <person name="Hall R.E."/>
            <person name="Hammond S."/>
            <person name="Harley J.L."/>
            <person name="Harrison E.S.I."/>
            <person name="Hart E.A."/>
            <person name="Heath P.D."/>
            <person name="Henderson C.D."/>
            <person name="Hopkins B.L."/>
            <person name="Howard P.J."/>
            <person name="Howden P.J."/>
            <person name="Huckle E."/>
            <person name="Johnson C."/>
            <person name="Johnson D."/>
            <person name="Joy A.A."/>
            <person name="Kay M."/>
            <person name="Keenan S."/>
            <person name="Kershaw J.K."/>
            <person name="Kimberley A.M."/>
            <person name="King A."/>
            <person name="Knights A."/>
            <person name="Laird G.K."/>
            <person name="Langford C."/>
            <person name="Lawlor S."/>
            <person name="Leongamornlert D.A."/>
            <person name="Leversha M."/>
            <person name="Lloyd C."/>
            <person name="Lloyd D.M."/>
            <person name="Lovell J."/>
            <person name="Martin S."/>
            <person name="Mashreghi-Mohammadi M."/>
            <person name="Matthews L."/>
            <person name="McLaren S."/>
            <person name="McLay K.E."/>
            <person name="McMurray A."/>
            <person name="Milne S."/>
            <person name="Nickerson T."/>
            <person name="Nisbett J."/>
            <person name="Nordsiek G."/>
            <person name="Pearce A.V."/>
            <person name="Peck A.I."/>
            <person name="Porter K.M."/>
            <person name="Pandian R."/>
            <person name="Pelan S."/>
            <person name="Phillimore B."/>
            <person name="Povey S."/>
            <person name="Ramsey Y."/>
            <person name="Rand V."/>
            <person name="Scharfe M."/>
            <person name="Sehra H.K."/>
            <person name="Shownkeen R."/>
            <person name="Sims S.K."/>
            <person name="Skuce C.D."/>
            <person name="Smith M."/>
            <person name="Steward C.A."/>
            <person name="Swarbreck D."/>
            <person name="Sycamore N."/>
            <person name="Tester J."/>
            <person name="Thorpe A."/>
            <person name="Tracey A."/>
            <person name="Tromans A."/>
            <person name="Thomas D.W."/>
            <person name="Wall M."/>
            <person name="Wallis J.M."/>
            <person name="West A.P."/>
            <person name="Whitehead S.L."/>
            <person name="Willey D.L."/>
            <person name="Williams S.A."/>
            <person name="Wilming L."/>
            <person name="Wray P.W."/>
            <person name="Young L."/>
            <person name="Ashurst J.L."/>
            <person name="Coulson A."/>
            <person name="Blocker H."/>
            <person name="Durbin R.M."/>
            <person name="Sulston J.E."/>
            <person name="Hubbard T."/>
            <person name="Jackson M.J."/>
            <person name="Bentley D.R."/>
            <person name="Beck S."/>
            <person name="Rogers J."/>
            <person name="Dunham I."/>
        </authorList>
    </citation>
    <scope>NUCLEOTIDE SEQUENCE [LARGE SCALE GENOMIC DNA]</scope>
</reference>
<reference key="5">
    <citation type="submission" date="2005-07" db="EMBL/GenBank/DDBJ databases">
        <authorList>
            <person name="Mural R.J."/>
            <person name="Istrail S."/>
            <person name="Sutton G.G."/>
            <person name="Florea L."/>
            <person name="Halpern A.L."/>
            <person name="Mobarry C.M."/>
            <person name="Lippert R."/>
            <person name="Walenz B."/>
            <person name="Shatkay H."/>
            <person name="Dew I."/>
            <person name="Miller J.R."/>
            <person name="Flanigan M.J."/>
            <person name="Edwards N.J."/>
            <person name="Bolanos R."/>
            <person name="Fasulo D."/>
            <person name="Halldorsson B.V."/>
            <person name="Hannenhalli S."/>
            <person name="Turner R."/>
            <person name="Yooseph S."/>
            <person name="Lu F."/>
            <person name="Nusskern D.R."/>
            <person name="Shue B.C."/>
            <person name="Zheng X.H."/>
            <person name="Zhong F."/>
            <person name="Delcher A.L."/>
            <person name="Huson D.H."/>
            <person name="Kravitz S.A."/>
            <person name="Mouchard L."/>
            <person name="Reinert K."/>
            <person name="Remington K.A."/>
            <person name="Clark A.G."/>
            <person name="Waterman M.S."/>
            <person name="Eichler E.E."/>
            <person name="Adams M.D."/>
            <person name="Hunkapiller M.W."/>
            <person name="Myers E.W."/>
            <person name="Venter J.C."/>
        </authorList>
    </citation>
    <scope>NUCLEOTIDE SEQUENCE [LARGE SCALE GENOMIC DNA]</scope>
</reference>
<reference key="6">
    <citation type="journal article" date="2004" name="Genome Res.">
        <title>The status, quality, and expansion of the NIH full-length cDNA project: the Mammalian Gene Collection (MGC).</title>
        <authorList>
            <consortium name="The MGC Project Team"/>
        </authorList>
    </citation>
    <scope>NUCLEOTIDE SEQUENCE [LARGE SCALE MRNA] (ISOFORM 2)</scope>
    <source>
        <tissue>Testis</tissue>
        <tissue>Uterus</tissue>
    </source>
</reference>
<reference key="7">
    <citation type="journal article" date="2002" name="Am. J. Hum. Genet.">
        <title>Mutations in the O-mannosyltransferase gene POMT1 give rise to the severe neuronal migration disorder Walker-Warburg syndrome.</title>
        <authorList>
            <person name="Beltran-Valero de Bernabe D."/>
            <person name="Currier S."/>
            <person name="Steinbrecher A."/>
            <person name="Celli J."/>
            <person name="van Beusekom E."/>
            <person name="van der Zwaag B."/>
            <person name="Kayserili H."/>
            <person name="Merlini L."/>
            <person name="Chitayat D."/>
            <person name="Dobyns W.B."/>
            <person name="Cormand B."/>
            <person name="Lehesjoki A.-E."/>
            <person name="Cruces J."/>
            <person name="Voit T."/>
            <person name="Walsh C.A."/>
            <person name="van Bokhoven H."/>
            <person name="Brunner H.G."/>
        </authorList>
    </citation>
    <scope>FUNCTION</scope>
    <scope>VARIANTS MDDGA1 ARG-76 AND ASP-428</scope>
</reference>
<reference key="8">
    <citation type="journal article" date="2004" name="Proc. Natl. Acad. Sci. U.S.A.">
        <title>Demonstration of mammalian protein O-mannosyltransferase activity: coexpression of POMT1 and POMT2 required for enzymatic activity.</title>
        <authorList>
            <person name="Manya H."/>
            <person name="Chiba A."/>
            <person name="Yoshida A."/>
            <person name="Wang X."/>
            <person name="Chiba Y."/>
            <person name="Jigami Y."/>
            <person name="Margolis R.U."/>
            <person name="Endo T."/>
        </authorList>
    </citation>
    <scope>FUNCTION</scope>
    <scope>CATALYTIC ACTIVITY</scope>
    <scope>ACTIVITY REGULATION</scope>
    <scope>SUBCELLULAR LOCATION</scope>
</reference>
<reference key="9">
    <citation type="journal article" date="2009" name="J. Proteome Res.">
        <title>Glycoproteomics analysis of human liver tissue by combination of multiple enzyme digestion and hydrazide chemistry.</title>
        <authorList>
            <person name="Chen R."/>
            <person name="Jiang X."/>
            <person name="Sun D."/>
            <person name="Han G."/>
            <person name="Wang F."/>
            <person name="Ye M."/>
            <person name="Wang L."/>
            <person name="Zou H."/>
        </authorList>
    </citation>
    <scope>GLYCOSYLATION [LARGE SCALE ANALYSIS] AT ASN-471</scope>
    <source>
        <tissue>Liver</tissue>
    </source>
</reference>
<reference key="10">
    <citation type="journal article" date="2017" name="J. Biol. Chem.">
        <title>Mammalian O-mannosylation of cadherins and plexins is independent of protein O-mannosyltransferases 1 and 2.</title>
        <authorList>
            <person name="Larsen I.S.B."/>
            <person name="Narimatsu Y."/>
            <person name="Joshi H.J."/>
            <person name="Yang Z."/>
            <person name="Harrison O.J."/>
            <person name="Brasch J."/>
            <person name="Shapiro L."/>
            <person name="Honig B."/>
            <person name="Vakhrushev S.Y."/>
            <person name="Clausen H."/>
            <person name="Halim A."/>
        </authorList>
    </citation>
    <scope>FUNCTION</scope>
    <scope>CATALYTIC ACTIVITY</scope>
</reference>
<reference key="11">
    <citation type="journal article" date="2004" name="Neurology">
        <title>POMT1 mutation results in defective glycosylation and loss of laminin-binding activity in alpha-DG.</title>
        <authorList>
            <person name="Kim D.-S."/>
            <person name="Hayashi Y.K."/>
            <person name="Matsumoto H."/>
            <person name="Ogawa M."/>
            <person name="Noguchi S."/>
            <person name="Murakami N."/>
            <person name="Sakuta R."/>
            <person name="Mochizuki M."/>
            <person name="Michele D.E."/>
            <person name="Campbell K.P."/>
            <person name="Nonaka I."/>
            <person name="Nishino I."/>
        </authorList>
    </citation>
    <scope>VARIANT MDDGA1 LEU-421 DEL</scope>
</reference>
<reference key="12">
    <citation type="journal article" date="2005" name="Am. J. Med. Genet. A">
        <title>Mutations in POMT1 are found in a minority of patients with Walker-Warburg syndrome.</title>
        <authorList>
            <person name="Currier S.C."/>
            <person name="Lee C.K."/>
            <person name="Chang B.S."/>
            <person name="Bodell A.L."/>
            <person name="Pai G.S."/>
            <person name="Job L."/>
            <person name="Lagae L.G."/>
            <person name="Al-Gazali L.I."/>
            <person name="Eyaid W.M."/>
            <person name="Enns G."/>
            <person name="Dobyns W.B."/>
            <person name="Walsh C.A."/>
        </authorList>
    </citation>
    <scope>VARIANT MDDGA1 ARG-537</scope>
</reference>
<reference key="13">
    <citation type="journal article" date="2005" name="Neuromuscul. Disord.">
        <title>An autosomal recessive limb girdle muscular dystrophy (LGMD2) with mild mental retardation is allelic to Walker-Warburg syndrome (WWS) caused by a mutation in the POMT1 gene.</title>
        <authorList>
            <person name="Balci B."/>
            <person name="Uyanik G."/>
            <person name="Dincer P."/>
            <person name="Gross C."/>
            <person name="Willer T."/>
            <person name="Talim B."/>
            <person name="Haliloglu G."/>
            <person name="Kale G."/>
            <person name="Hehr U."/>
            <person name="Winkler J."/>
            <person name="Topaloglu H."/>
        </authorList>
    </citation>
    <scope>VARIANT MDDGC1 PRO-200</scope>
</reference>
<reference key="14">
    <citation type="journal article" date="2006" name="Hum. Mutat.">
        <title>The expanding phenotype of POMT1 mutations: from Walker-Warburg syndrome to congenital muscular dystrophy, microcephaly, and mental retardation.</title>
        <authorList>
            <person name="van Reeuwijk J."/>
            <person name="Maugenre S."/>
            <person name="van den Elzen C."/>
            <person name="Verrips A."/>
            <person name="Bertini E."/>
            <person name="Muntoni F."/>
            <person name="Merlini L."/>
            <person name="Scheffer H."/>
            <person name="Brunner H.G."/>
            <person name="Guicheney P."/>
            <person name="van Bokhoven H."/>
        </authorList>
    </citation>
    <scope>VARIANTS MDDGB1 ARG-65; MET-140 DEL; CYS-582 AND HIS-590</scope>
    <scope>VARIANTS MDDGA1 CYS-105; HIS-105 AND VAL-207</scope>
    <scope>VARIANTS PHE-285 AND LYS-522</scope>
</reference>
<reference key="15">
    <citation type="journal article" date="2006" name="Neurology">
        <title>Expanding the clinical spectrum of POMT1 phenotype.</title>
        <authorList>
            <person name="D'Amico A."/>
            <person name="Tessa A."/>
            <person name="Bruno C."/>
            <person name="Petrini S."/>
            <person name="Biancheri R."/>
            <person name="Pane M."/>
            <person name="Pedemonte M."/>
            <person name="Ricci E."/>
            <person name="Falace A."/>
            <person name="Rossi A."/>
            <person name="Mercuri E."/>
            <person name="Santorelli F.M."/>
            <person name="Bertini E."/>
        </authorList>
    </citation>
    <scope>VARIANTS MDDGB1 ARG-65; HIS-590 AND THR-669</scope>
</reference>
<reference key="16">
    <citation type="journal article" date="2009" name="Neurology">
        <title>Congenital muscular dystrophies with defective glycosylation of dystroglycan: a population study.</title>
        <authorList>
            <person name="Mercuri E."/>
            <person name="Messina S."/>
            <person name="Bruno C."/>
            <person name="Mora M."/>
            <person name="Pegoraro E."/>
            <person name="Comi G.P."/>
            <person name="D'Amico A."/>
            <person name="Aiello C."/>
            <person name="Biancheri R."/>
            <person name="Berardinelli A."/>
            <person name="Boffi P."/>
            <person name="Cassandrini D."/>
            <person name="Laverda A."/>
            <person name="Moggio M."/>
            <person name="Morandi L."/>
            <person name="Moroni I."/>
            <person name="Pane M."/>
            <person name="Pezzani R."/>
            <person name="Pichiecchio A."/>
            <person name="Pini A."/>
            <person name="Minetti C."/>
            <person name="Mongini T."/>
            <person name="Mottarelli E."/>
            <person name="Ricci E."/>
            <person name="Ruggieri A."/>
            <person name="Saredi S."/>
            <person name="Scuderi C."/>
            <person name="Tessa A."/>
            <person name="Toscano A."/>
            <person name="Tortorella G."/>
            <person name="Trevisan C.P."/>
            <person name="Uggetti C."/>
            <person name="Vasco G."/>
            <person name="Santorelli F.M."/>
            <person name="Bertini E."/>
        </authorList>
    </citation>
    <scope>VARIANTS MDDGB1 ARG-65 AND ARG-537</scope>
</reference>